<reference key="1">
    <citation type="journal article" date="1999" name="Insect Mol. Biol.">
        <title>Insect immunity: molecular cloning, expression, and characterization of cDNAs and genomic DNA encoding three isoforms of insect defensin in Aedes aegypti.</title>
        <authorList>
            <person name="Lowenberger C.A."/>
            <person name="Smartt C.T."/>
            <person name="Bulet P."/>
            <person name="Ferdig M.T."/>
            <person name="Severson D.W."/>
            <person name="Hoffmann J.A."/>
            <person name="Christensen B.M."/>
        </authorList>
    </citation>
    <scope>NUCLEOTIDE SEQUENCE [MRNA]</scope>
    <scope>DEVELOPMENTAL STAGE</scope>
    <source>
        <strain>Liverpool</strain>
        <tissue>Fat body</tissue>
    </source>
</reference>
<reference key="2">
    <citation type="journal article" date="2007" name="Science">
        <title>Genome sequence of Aedes aegypti, a major arbovirus vector.</title>
        <authorList>
            <person name="Nene V."/>
            <person name="Wortman J.R."/>
            <person name="Lawson D."/>
            <person name="Haas B.J."/>
            <person name="Kodira C.D."/>
            <person name="Tu Z.J."/>
            <person name="Loftus B.J."/>
            <person name="Xi Z."/>
            <person name="Megy K."/>
            <person name="Grabherr M."/>
            <person name="Ren Q."/>
            <person name="Zdobnov E.M."/>
            <person name="Lobo N.F."/>
            <person name="Campbell K.S."/>
            <person name="Brown S.E."/>
            <person name="Bonaldo M.F."/>
            <person name="Zhu J."/>
            <person name="Sinkins S.P."/>
            <person name="Hogenkamp D.G."/>
            <person name="Amedeo P."/>
            <person name="Arensburger P."/>
            <person name="Atkinson P.W."/>
            <person name="Bidwell S.L."/>
            <person name="Biedler J."/>
            <person name="Birney E."/>
            <person name="Bruggner R.V."/>
            <person name="Costas J."/>
            <person name="Coy M.R."/>
            <person name="Crabtree J."/>
            <person name="Crawford M."/>
            <person name="DeBruyn B."/>
            <person name="DeCaprio D."/>
            <person name="Eiglmeier K."/>
            <person name="Eisenstadt E."/>
            <person name="El-Dorry H."/>
            <person name="Gelbart W.M."/>
            <person name="Gomes S.L."/>
            <person name="Hammond M."/>
            <person name="Hannick L.I."/>
            <person name="Hogan J.R."/>
            <person name="Holmes M.H."/>
            <person name="Jaffe D."/>
            <person name="Johnston S.J."/>
            <person name="Kennedy R.C."/>
            <person name="Koo H."/>
            <person name="Kravitz S."/>
            <person name="Kriventseva E.V."/>
            <person name="Kulp D."/>
            <person name="Labutti K."/>
            <person name="Lee E."/>
            <person name="Li S."/>
            <person name="Lovin D.D."/>
            <person name="Mao C."/>
            <person name="Mauceli E."/>
            <person name="Menck C.F."/>
            <person name="Miller J.R."/>
            <person name="Montgomery P."/>
            <person name="Mori A."/>
            <person name="Nascimento A.L."/>
            <person name="Naveira H.F."/>
            <person name="Nusbaum C."/>
            <person name="O'Leary S.B."/>
            <person name="Orvis J."/>
            <person name="Pertea M."/>
            <person name="Quesneville H."/>
            <person name="Reidenbach K.R."/>
            <person name="Rogers Y.-H.C."/>
            <person name="Roth C.W."/>
            <person name="Schneider J.R."/>
            <person name="Schatz M."/>
            <person name="Shumway M."/>
            <person name="Stanke M."/>
            <person name="Stinson E.O."/>
            <person name="Tubio J.M.C."/>
            <person name="Vanzee J.P."/>
            <person name="Verjovski-Almeida S."/>
            <person name="Werner D."/>
            <person name="White O.R."/>
            <person name="Wyder S."/>
            <person name="Zeng Q."/>
            <person name="Zhao Q."/>
            <person name="Zhao Y."/>
            <person name="Hill C.A."/>
            <person name="Raikhel A.S."/>
            <person name="Soares M.B."/>
            <person name="Knudson D.L."/>
            <person name="Lee N.H."/>
            <person name="Galagan J."/>
            <person name="Salzberg S.L."/>
            <person name="Paulsen I.T."/>
            <person name="Dimopoulos G."/>
            <person name="Collins F.H."/>
            <person name="Bruce B."/>
            <person name="Fraser-Liggett C.M."/>
            <person name="Severson D.W."/>
        </authorList>
    </citation>
    <scope>NUCLEOTIDE SEQUENCE [LARGE SCALE GENOMIC DNA]</scope>
    <source>
        <strain>LVPib12</strain>
    </source>
</reference>
<reference key="3">
    <citation type="journal article" date="1995" name="Insect Biochem. Mol. Biol.">
        <title>Insect immunity: isolation of three novel inducible antibacterial defensins from the vector mosquito, Aedes aegypti.</title>
        <authorList>
            <person name="Lowenberger C."/>
            <person name="Bulet P."/>
            <person name="Charlet M."/>
            <person name="Hetru C."/>
            <person name="Hodgeman B."/>
            <person name="Christensen B.M."/>
            <person name="Hoffmann J.A."/>
        </authorList>
    </citation>
    <scope>PROTEIN SEQUENCE OF 59-98</scope>
    <scope>FUNCTION</scope>
    <scope>SUBCELLULAR LOCATION</scope>
    <scope>INDUCTION</scope>
    <source>
        <strain>Liverpool</strain>
    </source>
</reference>
<accession>P81602</accession>
<accession>Q71U14</accession>
<accession>Q71U15</accession>
<dbReference type="EMBL" id="AF156090">
    <property type="protein sequence ID" value="AAD40114.2"/>
    <property type="molecule type" value="mRNA"/>
</dbReference>
<dbReference type="EMBL" id="AF156091">
    <property type="protein sequence ID" value="AAD40115.2"/>
    <property type="molecule type" value="mRNA"/>
</dbReference>
<dbReference type="EMBL" id="CH477283">
    <property type="status" value="NOT_ANNOTATED_CDS"/>
    <property type="molecule type" value="Genomic_DNA"/>
</dbReference>
<dbReference type="SMR" id="P81602"/>
<dbReference type="FunCoup" id="P81602">
    <property type="interactions" value="69"/>
</dbReference>
<dbReference type="STRING" id="7159.P81602"/>
<dbReference type="VEuPathDB" id="VectorBase:AAEL003841"/>
<dbReference type="HOGENOM" id="CLU_174272_0_0_1"/>
<dbReference type="InParanoid" id="P81602"/>
<dbReference type="Proteomes" id="UP000008820">
    <property type="component" value="Unassembled WGS sequence"/>
</dbReference>
<dbReference type="Proteomes" id="UP000682892">
    <property type="component" value="Unassembled WGS sequence"/>
</dbReference>
<dbReference type="GO" id="GO:0005615">
    <property type="term" value="C:extracellular space"/>
    <property type="evidence" value="ECO:0007669"/>
    <property type="project" value="TreeGrafter"/>
</dbReference>
<dbReference type="GO" id="GO:0050830">
    <property type="term" value="P:defense response to Gram-positive bacterium"/>
    <property type="evidence" value="ECO:0007669"/>
    <property type="project" value="UniProtKB-ARBA"/>
</dbReference>
<dbReference type="GO" id="GO:0006959">
    <property type="term" value="P:humoral immune response"/>
    <property type="evidence" value="ECO:0007669"/>
    <property type="project" value="TreeGrafter"/>
</dbReference>
<dbReference type="GO" id="GO:0045087">
    <property type="term" value="P:innate immune response"/>
    <property type="evidence" value="ECO:0007669"/>
    <property type="project" value="UniProtKB-KW"/>
</dbReference>
<dbReference type="CDD" id="cd21806">
    <property type="entry name" value="DEFL_defensin-like"/>
    <property type="match status" value="1"/>
</dbReference>
<dbReference type="FunFam" id="3.30.30.10:FF:000005">
    <property type="entry name" value="Defensin"/>
    <property type="match status" value="1"/>
</dbReference>
<dbReference type="Gene3D" id="3.30.30.10">
    <property type="entry name" value="Knottin, scorpion toxin-like"/>
    <property type="match status" value="1"/>
</dbReference>
<dbReference type="InterPro" id="IPR001542">
    <property type="entry name" value="Defensin_invertebrate/fungal"/>
</dbReference>
<dbReference type="InterPro" id="IPR036574">
    <property type="entry name" value="Scorpion_toxin-like_sf"/>
</dbReference>
<dbReference type="PANTHER" id="PTHR13645">
    <property type="entry name" value="DEFENSIN"/>
    <property type="match status" value="1"/>
</dbReference>
<dbReference type="PANTHER" id="PTHR13645:SF0">
    <property type="entry name" value="DEFENSIN"/>
    <property type="match status" value="1"/>
</dbReference>
<dbReference type="Pfam" id="PF01097">
    <property type="entry name" value="Defensin_2"/>
    <property type="match status" value="1"/>
</dbReference>
<dbReference type="SUPFAM" id="SSF57095">
    <property type="entry name" value="Scorpion toxin-like"/>
    <property type="match status" value="1"/>
</dbReference>
<dbReference type="PROSITE" id="PS51378">
    <property type="entry name" value="INVERT_DEFENSINS"/>
    <property type="match status" value="1"/>
</dbReference>
<gene>
    <name type="primary">DEFB</name>
    <name type="ORF">AAEL003857</name>
</gene>
<sequence length="98" mass="10583">MKSITVICFLALCTVAITSAYPQEPVLADEARPFANSLFDELPEETYQAAVENFRLKRATCDLLSGFGVGDSACAAHCIARGNRGGYCNSQKVCVCRN</sequence>
<organism>
    <name type="scientific">Aedes aegypti</name>
    <name type="common">Yellowfever mosquito</name>
    <name type="synonym">Culex aegypti</name>
    <dbReference type="NCBI Taxonomy" id="7159"/>
    <lineage>
        <taxon>Eukaryota</taxon>
        <taxon>Metazoa</taxon>
        <taxon>Ecdysozoa</taxon>
        <taxon>Arthropoda</taxon>
        <taxon>Hexapoda</taxon>
        <taxon>Insecta</taxon>
        <taxon>Pterygota</taxon>
        <taxon>Neoptera</taxon>
        <taxon>Endopterygota</taxon>
        <taxon>Diptera</taxon>
        <taxon>Nematocera</taxon>
        <taxon>Culicoidea</taxon>
        <taxon>Culicidae</taxon>
        <taxon>Culicinae</taxon>
        <taxon>Aedini</taxon>
        <taxon>Aedes</taxon>
        <taxon>Stegomyia</taxon>
    </lineage>
</organism>
<protein>
    <recommendedName>
        <fullName>Defensin-B</fullName>
    </recommendedName>
</protein>
<comment type="function">
    <text evidence="2 3">Antibacterial peptide mostly active against Gram-positive bacteria.</text>
</comment>
<comment type="subcellular location">
    <subcellularLocation>
        <location evidence="2 3">Secreted</location>
    </subcellularLocation>
</comment>
<comment type="induction">
    <text evidence="3">By bacterial infection.</text>
</comment>
<comment type="polymorphism">
    <text>There are two defensin B isoforms, B1 (shown here) and B2.</text>
</comment>
<comment type="similarity">
    <text evidence="2">Belongs to the invertebrate defensin family. Type 1 subfamily.</text>
</comment>
<name>DEFB_AEDAE</name>
<feature type="signal peptide" evidence="1">
    <location>
        <begin position="1"/>
        <end position="20"/>
    </location>
</feature>
<feature type="propeptide" id="PRO_0000289969" evidence="3">
    <location>
        <begin position="21"/>
        <end position="58"/>
    </location>
</feature>
<feature type="peptide" id="PRO_0000044708" description="Defensin-B">
    <location>
        <begin position="59"/>
        <end position="98"/>
    </location>
</feature>
<feature type="disulfide bond" evidence="2">
    <location>
        <begin position="61"/>
        <end position="88"/>
    </location>
</feature>
<feature type="disulfide bond" evidence="2">
    <location>
        <begin position="74"/>
        <end position="94"/>
    </location>
</feature>
<feature type="disulfide bond" evidence="2">
    <location>
        <begin position="78"/>
        <end position="96"/>
    </location>
</feature>
<feature type="sequence variant" description="In isoform B2.">
    <original>VA</original>
    <variation>GS</variation>
    <location>
        <begin position="15"/>
        <end position="16"/>
    </location>
</feature>
<keyword id="KW-0044">Antibiotic</keyword>
<keyword id="KW-0929">Antimicrobial</keyword>
<keyword id="KW-0211">Defensin</keyword>
<keyword id="KW-0903">Direct protein sequencing</keyword>
<keyword id="KW-1015">Disulfide bond</keyword>
<keyword id="KW-0391">Immunity</keyword>
<keyword id="KW-0399">Innate immunity</keyword>
<keyword id="KW-1185">Reference proteome</keyword>
<keyword id="KW-0964">Secreted</keyword>
<keyword id="KW-0732">Signal</keyword>
<proteinExistence type="evidence at protein level"/>
<evidence type="ECO:0000255" key="1"/>
<evidence type="ECO:0000255" key="2">
    <source>
        <dbReference type="PROSITE-ProRule" id="PRU00710"/>
    </source>
</evidence>
<evidence type="ECO:0000269" key="3">
    <source>
    </source>
</evidence>